<organism>
    <name type="scientific">Yersinia pestis (strain Pestoides F)</name>
    <dbReference type="NCBI Taxonomy" id="386656"/>
    <lineage>
        <taxon>Bacteria</taxon>
        <taxon>Pseudomonadati</taxon>
        <taxon>Pseudomonadota</taxon>
        <taxon>Gammaproteobacteria</taxon>
        <taxon>Enterobacterales</taxon>
        <taxon>Yersiniaceae</taxon>
        <taxon>Yersinia</taxon>
    </lineage>
</organism>
<comment type="function">
    <text evidence="1">Transfers a GMP moiety from GTP to Mo-molybdopterin (Mo-MPT) cofactor (Moco or molybdenum cofactor) to form Mo-molybdopterin guanine dinucleotide (Mo-MGD) cofactor.</text>
</comment>
<comment type="catalytic activity">
    <reaction evidence="1">
        <text>Mo-molybdopterin + GTP + H(+) = Mo-molybdopterin guanine dinucleotide + diphosphate</text>
        <dbReference type="Rhea" id="RHEA:34243"/>
        <dbReference type="ChEBI" id="CHEBI:15378"/>
        <dbReference type="ChEBI" id="CHEBI:33019"/>
        <dbReference type="ChEBI" id="CHEBI:37565"/>
        <dbReference type="ChEBI" id="CHEBI:71302"/>
        <dbReference type="ChEBI" id="CHEBI:71310"/>
        <dbReference type="EC" id="2.7.7.77"/>
    </reaction>
</comment>
<comment type="cofactor">
    <cofactor evidence="1">
        <name>Mg(2+)</name>
        <dbReference type="ChEBI" id="CHEBI:18420"/>
    </cofactor>
</comment>
<comment type="subunit">
    <text evidence="1">Monomer.</text>
</comment>
<comment type="subcellular location">
    <subcellularLocation>
        <location evidence="1">Cytoplasm</location>
    </subcellularLocation>
</comment>
<comment type="domain">
    <text evidence="1">The N-terminal domain determines nucleotide recognition and specific binding, while the C-terminal domain determines the specific binding to the target protein.</text>
</comment>
<comment type="similarity">
    <text evidence="1">Belongs to the MobA family.</text>
</comment>
<evidence type="ECO:0000255" key="1">
    <source>
        <dbReference type="HAMAP-Rule" id="MF_00316"/>
    </source>
</evidence>
<protein>
    <recommendedName>
        <fullName evidence="1">Molybdenum cofactor guanylyltransferase</fullName>
        <shortName evidence="1">MoCo guanylyltransferase</shortName>
        <ecNumber evidence="1">2.7.7.77</ecNumber>
    </recommendedName>
    <alternativeName>
        <fullName evidence="1">GTP:molybdopterin guanylyltransferase</fullName>
    </alternativeName>
    <alternativeName>
        <fullName evidence="1">Mo-MPT guanylyltransferase</fullName>
    </alternativeName>
    <alternativeName>
        <fullName evidence="1">Molybdopterin guanylyltransferase</fullName>
    </alternativeName>
    <alternativeName>
        <fullName evidence="1">Molybdopterin-guanine dinucleotide synthase</fullName>
        <shortName evidence="1">MGD synthase</shortName>
    </alternativeName>
</protein>
<dbReference type="EC" id="2.7.7.77" evidence="1"/>
<dbReference type="EMBL" id="CP000668">
    <property type="protein sequence ID" value="ABP42233.1"/>
    <property type="molecule type" value="Genomic_DNA"/>
</dbReference>
<dbReference type="RefSeq" id="WP_002213171.1">
    <property type="nucleotide sequence ID" value="NZ_CP009715.1"/>
</dbReference>
<dbReference type="SMR" id="A4TSH1"/>
<dbReference type="GeneID" id="57974576"/>
<dbReference type="KEGG" id="ypp:YPDSF_3890"/>
<dbReference type="PATRIC" id="fig|386656.14.peg.627"/>
<dbReference type="GO" id="GO:0005737">
    <property type="term" value="C:cytoplasm"/>
    <property type="evidence" value="ECO:0007669"/>
    <property type="project" value="UniProtKB-SubCell"/>
</dbReference>
<dbReference type="GO" id="GO:0005525">
    <property type="term" value="F:GTP binding"/>
    <property type="evidence" value="ECO:0007669"/>
    <property type="project" value="UniProtKB-UniRule"/>
</dbReference>
<dbReference type="GO" id="GO:0046872">
    <property type="term" value="F:metal ion binding"/>
    <property type="evidence" value="ECO:0007669"/>
    <property type="project" value="UniProtKB-KW"/>
</dbReference>
<dbReference type="GO" id="GO:0061603">
    <property type="term" value="F:molybdenum cofactor guanylyltransferase activity"/>
    <property type="evidence" value="ECO:0007669"/>
    <property type="project" value="UniProtKB-EC"/>
</dbReference>
<dbReference type="GO" id="GO:1902758">
    <property type="term" value="P:bis(molybdopterin guanine dinucleotide)molybdenum biosynthetic process"/>
    <property type="evidence" value="ECO:0007669"/>
    <property type="project" value="TreeGrafter"/>
</dbReference>
<dbReference type="CDD" id="cd02503">
    <property type="entry name" value="MobA"/>
    <property type="match status" value="1"/>
</dbReference>
<dbReference type="Gene3D" id="3.90.550.10">
    <property type="entry name" value="Spore Coat Polysaccharide Biosynthesis Protein SpsA, Chain A"/>
    <property type="match status" value="1"/>
</dbReference>
<dbReference type="HAMAP" id="MF_00316">
    <property type="entry name" value="MobA"/>
    <property type="match status" value="1"/>
</dbReference>
<dbReference type="InterPro" id="IPR025877">
    <property type="entry name" value="MobA-like_NTP_Trfase"/>
</dbReference>
<dbReference type="InterPro" id="IPR013482">
    <property type="entry name" value="Molybde_CF_guanTrfase"/>
</dbReference>
<dbReference type="InterPro" id="IPR029044">
    <property type="entry name" value="Nucleotide-diphossugar_trans"/>
</dbReference>
<dbReference type="NCBIfam" id="TIGR02665">
    <property type="entry name" value="molyb_mobA"/>
    <property type="match status" value="1"/>
</dbReference>
<dbReference type="PANTHER" id="PTHR19136">
    <property type="entry name" value="MOLYBDENUM COFACTOR GUANYLYLTRANSFERASE"/>
    <property type="match status" value="1"/>
</dbReference>
<dbReference type="PANTHER" id="PTHR19136:SF81">
    <property type="entry name" value="MOLYBDENUM COFACTOR GUANYLYLTRANSFERASE"/>
    <property type="match status" value="1"/>
</dbReference>
<dbReference type="Pfam" id="PF12804">
    <property type="entry name" value="NTP_transf_3"/>
    <property type="match status" value="1"/>
</dbReference>
<dbReference type="SUPFAM" id="SSF53448">
    <property type="entry name" value="Nucleotide-diphospho-sugar transferases"/>
    <property type="match status" value="1"/>
</dbReference>
<feature type="chain" id="PRO_1000019167" description="Molybdenum cofactor guanylyltransferase">
    <location>
        <begin position="1"/>
        <end position="195"/>
    </location>
</feature>
<feature type="binding site" evidence="1">
    <location>
        <begin position="10"/>
        <end position="12"/>
    </location>
    <ligand>
        <name>GTP</name>
        <dbReference type="ChEBI" id="CHEBI:37565"/>
    </ligand>
</feature>
<feature type="binding site" evidence="1">
    <location>
        <position position="23"/>
    </location>
    <ligand>
        <name>GTP</name>
        <dbReference type="ChEBI" id="CHEBI:37565"/>
    </ligand>
</feature>
<feature type="binding site" evidence="1">
    <location>
        <position position="51"/>
    </location>
    <ligand>
        <name>GTP</name>
        <dbReference type="ChEBI" id="CHEBI:37565"/>
    </ligand>
</feature>
<feature type="binding site" evidence="1">
    <location>
        <position position="69"/>
    </location>
    <ligand>
        <name>GTP</name>
        <dbReference type="ChEBI" id="CHEBI:37565"/>
    </ligand>
</feature>
<feature type="binding site" evidence="1">
    <location>
        <position position="99"/>
    </location>
    <ligand>
        <name>GTP</name>
        <dbReference type="ChEBI" id="CHEBI:37565"/>
    </ligand>
</feature>
<feature type="binding site" evidence="1">
    <location>
        <position position="99"/>
    </location>
    <ligand>
        <name>Mg(2+)</name>
        <dbReference type="ChEBI" id="CHEBI:18420"/>
    </ligand>
</feature>
<reference key="1">
    <citation type="submission" date="2007-02" db="EMBL/GenBank/DDBJ databases">
        <title>Complete sequence of chromosome of Yersinia pestis Pestoides F.</title>
        <authorList>
            <consortium name="US DOE Joint Genome Institute"/>
            <person name="Copeland A."/>
            <person name="Lucas S."/>
            <person name="Lapidus A."/>
            <person name="Barry K."/>
            <person name="Detter J.C."/>
            <person name="Glavina del Rio T."/>
            <person name="Hammon N."/>
            <person name="Israni S."/>
            <person name="Dalin E."/>
            <person name="Tice H."/>
            <person name="Pitluck S."/>
            <person name="Di Bartolo G."/>
            <person name="Chain P."/>
            <person name="Malfatti S."/>
            <person name="Shin M."/>
            <person name="Vergez L."/>
            <person name="Schmutz J."/>
            <person name="Larimer F."/>
            <person name="Land M."/>
            <person name="Hauser L."/>
            <person name="Worsham P."/>
            <person name="Chu M."/>
            <person name="Bearden S."/>
            <person name="Garcia E."/>
            <person name="Richardson P."/>
        </authorList>
    </citation>
    <scope>NUCLEOTIDE SEQUENCE [LARGE SCALE GENOMIC DNA]</scope>
    <source>
        <strain>Pestoides F</strain>
    </source>
</reference>
<keyword id="KW-0963">Cytoplasm</keyword>
<keyword id="KW-0342">GTP-binding</keyword>
<keyword id="KW-0460">Magnesium</keyword>
<keyword id="KW-0479">Metal-binding</keyword>
<keyword id="KW-0501">Molybdenum cofactor biosynthesis</keyword>
<keyword id="KW-0547">Nucleotide-binding</keyword>
<keyword id="KW-0808">Transferase</keyword>
<name>MOBA_YERPP</name>
<gene>
    <name evidence="1" type="primary">mobA</name>
    <name type="ordered locus">YPDSF_3890</name>
</gene>
<proteinExistence type="inferred from homology"/>
<accession>A4TSH1</accession>
<sequence length="195" mass="21445">MQPNITGVILAGGRSSRMGGNDKGLIPLNGKPLFQYVIDRFKPQVSDLVINANRNQGLYKESGIPVIDDIITGFVGPLAGMHAGLSYASTEWVVFAPCDVPALPSDLVSQLWQGKKQALAAYANDDERAHPTFALMHISLKTQLADYLIRGDRKLMLFLDSINAQRVKFSGKADLFSNLNTPADCDLWEQKRRGQ</sequence>